<reference key="1">
    <citation type="journal article" date="2004" name="J. Bacteriol.">
        <title>Comparative genomics of two Leptospira interrogans serovars reveals novel insights into physiology and pathogenesis.</title>
        <authorList>
            <person name="Nascimento A.L.T.O."/>
            <person name="Ko A.I."/>
            <person name="Martins E.A.L."/>
            <person name="Monteiro-Vitorello C.B."/>
            <person name="Ho P.L."/>
            <person name="Haake D.A."/>
            <person name="Verjovski-Almeida S."/>
            <person name="Hartskeerl R.A."/>
            <person name="Marques M.V."/>
            <person name="Oliveira M.C."/>
            <person name="Menck C.F.M."/>
            <person name="Leite L.C.C."/>
            <person name="Carrer H."/>
            <person name="Coutinho L.L."/>
            <person name="Degrave W.M."/>
            <person name="Dellagostin O.A."/>
            <person name="El-Dorry H."/>
            <person name="Ferro E.S."/>
            <person name="Ferro M.I.T."/>
            <person name="Furlan L.R."/>
            <person name="Gamberini M."/>
            <person name="Giglioti E.A."/>
            <person name="Goes-Neto A."/>
            <person name="Goldman G.H."/>
            <person name="Goldman M.H.S."/>
            <person name="Harakava R."/>
            <person name="Jeronimo S.M.B."/>
            <person name="Junqueira-de-Azevedo I.L.M."/>
            <person name="Kimura E.T."/>
            <person name="Kuramae E.E."/>
            <person name="Lemos E.G.M."/>
            <person name="Lemos M.V.F."/>
            <person name="Marino C.L."/>
            <person name="Nunes L.R."/>
            <person name="de Oliveira R.C."/>
            <person name="Pereira G.G."/>
            <person name="Reis M.S."/>
            <person name="Schriefer A."/>
            <person name="Siqueira W.J."/>
            <person name="Sommer P."/>
            <person name="Tsai S.M."/>
            <person name="Simpson A.J.G."/>
            <person name="Ferro J.A."/>
            <person name="Camargo L.E.A."/>
            <person name="Kitajima J.P."/>
            <person name="Setubal J.C."/>
            <person name="Van Sluys M.A."/>
        </authorList>
    </citation>
    <scope>NUCLEOTIDE SEQUENCE [LARGE SCALE GENOMIC DNA]</scope>
    <source>
        <strain>Fiocruz L1-130</strain>
    </source>
</reference>
<keyword id="KW-0687">Ribonucleoprotein</keyword>
<keyword id="KW-0689">Ribosomal protein</keyword>
<keyword id="KW-0694">RNA-binding</keyword>
<keyword id="KW-0699">rRNA-binding</keyword>
<dbReference type="EMBL" id="AE016823">
    <property type="protein sequence ID" value="AAS71412.1"/>
    <property type="molecule type" value="Genomic_DNA"/>
</dbReference>
<dbReference type="RefSeq" id="WP_000062824.1">
    <property type="nucleotide sequence ID" value="NC_005823.1"/>
</dbReference>
<dbReference type="SMR" id="Q72NH5"/>
<dbReference type="GeneID" id="61142733"/>
<dbReference type="KEGG" id="lic:LIC_12859"/>
<dbReference type="HOGENOM" id="CLU_098428_0_2_12"/>
<dbReference type="Proteomes" id="UP000007037">
    <property type="component" value="Chromosome I"/>
</dbReference>
<dbReference type="GO" id="GO:1990904">
    <property type="term" value="C:ribonucleoprotein complex"/>
    <property type="evidence" value="ECO:0007669"/>
    <property type="project" value="UniProtKB-KW"/>
</dbReference>
<dbReference type="GO" id="GO:0005840">
    <property type="term" value="C:ribosome"/>
    <property type="evidence" value="ECO:0007669"/>
    <property type="project" value="UniProtKB-KW"/>
</dbReference>
<dbReference type="GO" id="GO:0019843">
    <property type="term" value="F:rRNA binding"/>
    <property type="evidence" value="ECO:0007669"/>
    <property type="project" value="UniProtKB-UniRule"/>
</dbReference>
<dbReference type="GO" id="GO:0003735">
    <property type="term" value="F:structural constituent of ribosome"/>
    <property type="evidence" value="ECO:0007669"/>
    <property type="project" value="InterPro"/>
</dbReference>
<dbReference type="GO" id="GO:0006412">
    <property type="term" value="P:translation"/>
    <property type="evidence" value="ECO:0007669"/>
    <property type="project" value="UniProtKB-UniRule"/>
</dbReference>
<dbReference type="FunFam" id="3.30.1370.30:FF:000002">
    <property type="entry name" value="30S ribosomal protein S8"/>
    <property type="match status" value="1"/>
</dbReference>
<dbReference type="FunFam" id="3.30.1490.10:FF:000001">
    <property type="entry name" value="30S ribosomal protein S8"/>
    <property type="match status" value="1"/>
</dbReference>
<dbReference type="Gene3D" id="3.30.1370.30">
    <property type="match status" value="1"/>
</dbReference>
<dbReference type="Gene3D" id="3.30.1490.10">
    <property type="match status" value="1"/>
</dbReference>
<dbReference type="HAMAP" id="MF_01302_B">
    <property type="entry name" value="Ribosomal_uS8_B"/>
    <property type="match status" value="1"/>
</dbReference>
<dbReference type="InterPro" id="IPR000630">
    <property type="entry name" value="Ribosomal_uS8"/>
</dbReference>
<dbReference type="InterPro" id="IPR047863">
    <property type="entry name" value="Ribosomal_uS8_CS"/>
</dbReference>
<dbReference type="InterPro" id="IPR035987">
    <property type="entry name" value="Ribosomal_uS8_sf"/>
</dbReference>
<dbReference type="NCBIfam" id="NF001109">
    <property type="entry name" value="PRK00136.1"/>
    <property type="match status" value="1"/>
</dbReference>
<dbReference type="PANTHER" id="PTHR11758">
    <property type="entry name" value="40S RIBOSOMAL PROTEIN S15A"/>
    <property type="match status" value="1"/>
</dbReference>
<dbReference type="Pfam" id="PF00410">
    <property type="entry name" value="Ribosomal_S8"/>
    <property type="match status" value="1"/>
</dbReference>
<dbReference type="SUPFAM" id="SSF56047">
    <property type="entry name" value="Ribosomal protein S8"/>
    <property type="match status" value="1"/>
</dbReference>
<dbReference type="PROSITE" id="PS00053">
    <property type="entry name" value="RIBOSOMAL_S8"/>
    <property type="match status" value="1"/>
</dbReference>
<evidence type="ECO:0000255" key="1">
    <source>
        <dbReference type="HAMAP-Rule" id="MF_01302"/>
    </source>
</evidence>
<evidence type="ECO:0000305" key="2"/>
<name>RS8_LEPIC</name>
<sequence length="133" mass="15119">MSMSDPIGDMLTRIRNAGRAKHETCLVPGSKIKKSILDLMKEEGFIKDYESVKVNETFEDYKVFLKYDHTKRPIIRELVRVSTPGRRVYIKSAEIRPYKNNIGTLIVSTSKGIMTGKNARKLKLGGEVILKMS</sequence>
<comment type="function">
    <text evidence="1">One of the primary rRNA binding proteins, it binds directly to 16S rRNA central domain where it helps coordinate assembly of the platform of the 30S subunit.</text>
</comment>
<comment type="subunit">
    <text evidence="1">Part of the 30S ribosomal subunit. Contacts proteins S5 and S12.</text>
</comment>
<comment type="similarity">
    <text evidence="1">Belongs to the universal ribosomal protein uS8 family.</text>
</comment>
<organism>
    <name type="scientific">Leptospira interrogans serogroup Icterohaemorrhagiae serovar copenhageni (strain Fiocruz L1-130)</name>
    <dbReference type="NCBI Taxonomy" id="267671"/>
    <lineage>
        <taxon>Bacteria</taxon>
        <taxon>Pseudomonadati</taxon>
        <taxon>Spirochaetota</taxon>
        <taxon>Spirochaetia</taxon>
        <taxon>Leptospirales</taxon>
        <taxon>Leptospiraceae</taxon>
        <taxon>Leptospira</taxon>
    </lineage>
</organism>
<accession>Q72NH5</accession>
<protein>
    <recommendedName>
        <fullName evidence="1">Small ribosomal subunit protein uS8</fullName>
    </recommendedName>
    <alternativeName>
        <fullName evidence="2">30S ribosomal protein S8</fullName>
    </alternativeName>
</protein>
<feature type="chain" id="PRO_0000126427" description="Small ribosomal subunit protein uS8">
    <location>
        <begin position="1"/>
        <end position="133"/>
    </location>
</feature>
<gene>
    <name evidence="1" type="primary">rpsH</name>
    <name type="ordered locus">LIC_12859</name>
</gene>
<proteinExistence type="inferred from homology"/>